<sequence>MDLVDKRDVLIGDFRPSLGFYGGVRVGVYLDTTEPKHAKIKGFAMETLKRSSKVWLQELRSNLNIFWGTIESEISKNGAASYIFPLQRCIFSFLCASLAGVDASVSPDIAENGWKTINTWLALQVIPTAKLGVVPQPLEEILLHTWPYPSLLIAGNYKKLYNFIDENAGDCLRLGQEEFGLTRDEAIQNLLFVLGFNAYGGFSVFLPSLIGRITGDNSGLQERIRTEVRRVCGSGSDLNFKTVNEMELVKSVVYETLRFSPPVPLQFARARKDFQISSHDAVFEVKKGELLCGYQPLVMRDANVFDEPEEFKPDRYVGETGSELLNYLYWSNGPQTGTPSASNKQCAAKDIVTLTASLLVADLFLRYDTITGDSGSIKAVVKAK</sequence>
<protein>
    <recommendedName>
        <fullName evidence="6">Probable inactive linolenate hydroperoxide lyase</fullName>
    </recommendedName>
    <alternativeName>
        <fullName evidence="5">Cytochrome P450 74B2</fullName>
    </alternativeName>
    <alternativeName>
        <fullName evidence="4">Hydroperoxide lyase 1</fullName>
    </alternativeName>
</protein>
<feature type="chain" id="PRO_0000431454" description="Probable inactive linolenate hydroperoxide lyase">
    <location>
        <begin position="1"/>
        <end position="384"/>
    </location>
</feature>
<feature type="binding site" description="axial binding residue" evidence="1">
    <location>
        <position position="346"/>
    </location>
    <ligand>
        <name>heme</name>
        <dbReference type="ChEBI" id="CHEBI:30413"/>
    </ligand>
    <ligandPart>
        <name>Fe</name>
        <dbReference type="ChEBI" id="CHEBI:18248"/>
    </ligandPart>
</feature>
<name>Y74B2_ARATH</name>
<dbReference type="EMBL" id="Z97339">
    <property type="protein sequence ID" value="CAB45989.1"/>
    <property type="status" value="ALT_SEQ"/>
    <property type="molecule type" value="Genomic_DNA"/>
</dbReference>
<dbReference type="EMBL" id="AL161541">
    <property type="protein sequence ID" value="CAB78586.1"/>
    <property type="status" value="ALT_SEQ"/>
    <property type="molecule type" value="Genomic_DNA"/>
</dbReference>
<dbReference type="EMBL" id="CP002687">
    <property type="protein sequence ID" value="AEE83604.1"/>
    <property type="molecule type" value="Genomic_DNA"/>
</dbReference>
<dbReference type="EMBL" id="BT033071">
    <property type="protein sequence ID" value="ACE82594.1"/>
    <property type="molecule type" value="mRNA"/>
</dbReference>
<dbReference type="EMBL" id="AY080827">
    <property type="protein sequence ID" value="AAL87304.1"/>
    <property type="molecule type" value="mRNA"/>
</dbReference>
<dbReference type="PIR" id="D85170">
    <property type="entry name" value="D85170"/>
</dbReference>
<dbReference type="RefSeq" id="NP_193279.1">
    <property type="nucleotide sequence ID" value="NM_117633.3"/>
</dbReference>
<dbReference type="SMR" id="B3LF83"/>
<dbReference type="FunCoup" id="B3LF83">
    <property type="interactions" value="182"/>
</dbReference>
<dbReference type="STRING" id="3702.B3LF83"/>
<dbReference type="GlyGen" id="B3LF83">
    <property type="glycosylation" value="1 site"/>
</dbReference>
<dbReference type="PaxDb" id="3702-AT4G15440.1"/>
<dbReference type="ProteomicsDB" id="242370"/>
<dbReference type="DNASU" id="827215"/>
<dbReference type="EnsemblPlants" id="AT4G15440.1">
    <property type="protein sequence ID" value="AT4G15440.1"/>
    <property type="gene ID" value="AT4G15440"/>
</dbReference>
<dbReference type="GeneID" id="827215"/>
<dbReference type="Gramene" id="AT4G15440.1">
    <property type="protein sequence ID" value="AT4G15440.1"/>
    <property type="gene ID" value="AT4G15440"/>
</dbReference>
<dbReference type="KEGG" id="ath:AT4G15440"/>
<dbReference type="Araport" id="AT4G15440"/>
<dbReference type="TAIR" id="AT4G15440">
    <property type="gene designation" value="HPL1"/>
</dbReference>
<dbReference type="eggNOG" id="ENOG502QQNS">
    <property type="taxonomic scope" value="Eukaryota"/>
</dbReference>
<dbReference type="HOGENOM" id="CLU_045757_0_0_1"/>
<dbReference type="InParanoid" id="B3LF83"/>
<dbReference type="OMA" id="QCAAKDY"/>
<dbReference type="PhylomeDB" id="B3LF83"/>
<dbReference type="BioCyc" id="ARA:AT4G15440-MONOMER"/>
<dbReference type="BioCyc" id="ARA:MONOMER-1583"/>
<dbReference type="BioCyc" id="MetaCyc:MONOMER-1583"/>
<dbReference type="BRENDA" id="4.2.1.92">
    <property type="organism ID" value="399"/>
</dbReference>
<dbReference type="PRO" id="PR:B3LF83"/>
<dbReference type="Proteomes" id="UP000006548">
    <property type="component" value="Chromosome 4"/>
</dbReference>
<dbReference type="ExpressionAtlas" id="B3LF83">
    <property type="expression patterns" value="baseline and differential"/>
</dbReference>
<dbReference type="GO" id="GO:0009941">
    <property type="term" value="C:chloroplast envelope"/>
    <property type="evidence" value="ECO:0007005"/>
    <property type="project" value="TAIR"/>
</dbReference>
<dbReference type="GO" id="GO:0020037">
    <property type="term" value="F:heme binding"/>
    <property type="evidence" value="ECO:0007669"/>
    <property type="project" value="InterPro"/>
</dbReference>
<dbReference type="GO" id="GO:0005506">
    <property type="term" value="F:iron ion binding"/>
    <property type="evidence" value="ECO:0007669"/>
    <property type="project" value="InterPro"/>
</dbReference>
<dbReference type="GO" id="GO:0004497">
    <property type="term" value="F:monooxygenase activity"/>
    <property type="evidence" value="ECO:0007669"/>
    <property type="project" value="InterPro"/>
</dbReference>
<dbReference type="GO" id="GO:0016705">
    <property type="term" value="F:oxidoreductase activity, acting on paired donors, with incorporation or reduction of molecular oxygen"/>
    <property type="evidence" value="ECO:0007669"/>
    <property type="project" value="InterPro"/>
</dbReference>
<dbReference type="GO" id="GO:0006631">
    <property type="term" value="P:fatty acid metabolic process"/>
    <property type="evidence" value="ECO:0000250"/>
    <property type="project" value="TAIR"/>
</dbReference>
<dbReference type="GO" id="GO:0009611">
    <property type="term" value="P:response to wounding"/>
    <property type="evidence" value="ECO:0000270"/>
    <property type="project" value="TAIR"/>
</dbReference>
<dbReference type="CDD" id="cd11071">
    <property type="entry name" value="CYP74"/>
    <property type="match status" value="1"/>
</dbReference>
<dbReference type="Gene3D" id="1.10.630.10">
    <property type="entry name" value="Cytochrome P450"/>
    <property type="match status" value="1"/>
</dbReference>
<dbReference type="InterPro" id="IPR001128">
    <property type="entry name" value="Cyt_P450"/>
</dbReference>
<dbReference type="InterPro" id="IPR002403">
    <property type="entry name" value="Cyt_P450_E_grp-IV"/>
</dbReference>
<dbReference type="InterPro" id="IPR036396">
    <property type="entry name" value="Cyt_P450_sf"/>
</dbReference>
<dbReference type="PANTHER" id="PTHR24286">
    <property type="entry name" value="CYTOCHROME P450 26"/>
    <property type="match status" value="1"/>
</dbReference>
<dbReference type="PANTHER" id="PTHR24286:SF49">
    <property type="entry name" value="INACTIVE LINOLENATE HYDROPEROXIDE LYASE-RELATED"/>
    <property type="match status" value="1"/>
</dbReference>
<dbReference type="Pfam" id="PF00067">
    <property type="entry name" value="p450"/>
    <property type="match status" value="1"/>
</dbReference>
<dbReference type="PRINTS" id="PR00465">
    <property type="entry name" value="EP450IV"/>
</dbReference>
<dbReference type="SUPFAM" id="SSF48264">
    <property type="entry name" value="Cytochrome P450"/>
    <property type="match status" value="1"/>
</dbReference>
<accession>B3LF83</accession>
<accession>Q8RXK9</accession>
<accession>Q9SUL4</accession>
<evidence type="ECO:0000250" key="1">
    <source>
        <dbReference type="UniProtKB" id="Q96242"/>
    </source>
</evidence>
<evidence type="ECO:0000269" key="2">
    <source>
    </source>
</evidence>
<evidence type="ECO:0000269" key="3">
    <source>
    </source>
</evidence>
<evidence type="ECO:0000303" key="4">
    <source>
    </source>
</evidence>
<evidence type="ECO:0000305" key="5"/>
<evidence type="ECO:0000305" key="6">
    <source>
    </source>
</evidence>
<comment type="cofactor">
    <cofactor evidence="1">
        <name>heme</name>
        <dbReference type="ChEBI" id="CHEBI:30413"/>
    </cofactor>
</comment>
<comment type="tissue specificity">
    <text evidence="2 3">Expressed in roots, leaves, flowers and siliques.</text>
</comment>
<comment type="induction">
    <text evidence="3">By wounding.</text>
</comment>
<comment type="similarity">
    <text evidence="5">Belongs to the cytochrome P450 family.</text>
</comment>
<comment type="caution">
    <text evidence="2">In cv. Columbia, CYP74B2 (AC B3LF83) DNA sequence contains a 10-bp deletion that leads to a shorter N-terminus compared to typical other CYP74B subfamily members, and CYP74B2 is thought to be a non-functional enzyme. Functional alleles, with full N-terminus are found in cv. Landsberg erecta and cv. Wassilewskija (AC Q9ZSY9).</text>
</comment>
<comment type="sequence caution" evidence="5">
    <conflict type="erroneous gene model prediction">
        <sequence resource="EMBL-CDS" id="CAB45989"/>
    </conflict>
</comment>
<comment type="sequence caution" evidence="5">
    <conflict type="erroneous gene model prediction">
        <sequence resource="EMBL-CDS" id="CAB78586"/>
    </conflict>
</comment>
<gene>
    <name evidence="5" type="primary">CYP74B2</name>
    <name evidence="4" type="synonym">HPL1</name>
    <name type="ordered locus">At4g15440</name>
    <name type="ORF">dl3766w</name>
</gene>
<proteinExistence type="evidence at transcript level"/>
<keyword id="KW-0349">Heme</keyword>
<keyword id="KW-0408">Iron</keyword>
<keyword id="KW-0479">Metal-binding</keyword>
<keyword id="KW-1185">Reference proteome</keyword>
<organism>
    <name type="scientific">Arabidopsis thaliana</name>
    <name type="common">Mouse-ear cress</name>
    <dbReference type="NCBI Taxonomy" id="3702"/>
    <lineage>
        <taxon>Eukaryota</taxon>
        <taxon>Viridiplantae</taxon>
        <taxon>Streptophyta</taxon>
        <taxon>Embryophyta</taxon>
        <taxon>Tracheophyta</taxon>
        <taxon>Spermatophyta</taxon>
        <taxon>Magnoliopsida</taxon>
        <taxon>eudicotyledons</taxon>
        <taxon>Gunneridae</taxon>
        <taxon>Pentapetalae</taxon>
        <taxon>rosids</taxon>
        <taxon>malvids</taxon>
        <taxon>Brassicales</taxon>
        <taxon>Brassicaceae</taxon>
        <taxon>Camelineae</taxon>
        <taxon>Arabidopsis</taxon>
    </lineage>
</organism>
<reference key="1">
    <citation type="journal article" date="1998" name="Nature">
        <title>Analysis of 1.9 Mb of contiguous sequence from chromosome 4 of Arabidopsis thaliana.</title>
        <authorList>
            <person name="Bevan M."/>
            <person name="Bancroft I."/>
            <person name="Bent E."/>
            <person name="Love K."/>
            <person name="Goodman H.M."/>
            <person name="Dean C."/>
            <person name="Bergkamp R."/>
            <person name="Dirkse W."/>
            <person name="van Staveren M."/>
            <person name="Stiekema W."/>
            <person name="Drost L."/>
            <person name="Ridley P."/>
            <person name="Hudson S.-A."/>
            <person name="Patel K."/>
            <person name="Murphy G."/>
            <person name="Piffanelli P."/>
            <person name="Wedler H."/>
            <person name="Wedler E."/>
            <person name="Wambutt R."/>
            <person name="Weitzenegger T."/>
            <person name="Pohl T."/>
            <person name="Terryn N."/>
            <person name="Gielen J."/>
            <person name="Villarroel R."/>
            <person name="De Clercq R."/>
            <person name="van Montagu M."/>
            <person name="Lecharny A."/>
            <person name="Aubourg S."/>
            <person name="Gy I."/>
            <person name="Kreis M."/>
            <person name="Lao N."/>
            <person name="Kavanagh T."/>
            <person name="Hempel S."/>
            <person name="Kotter P."/>
            <person name="Entian K.-D."/>
            <person name="Rieger M."/>
            <person name="Schaefer M."/>
            <person name="Funk B."/>
            <person name="Mueller-Auer S."/>
            <person name="Silvey M."/>
            <person name="James R."/>
            <person name="Monfort A."/>
            <person name="Pons A."/>
            <person name="Puigdomenech P."/>
            <person name="Douka A."/>
            <person name="Voukelatou E."/>
            <person name="Milioni D."/>
            <person name="Hatzopoulos P."/>
            <person name="Piravandi E."/>
            <person name="Obermaier B."/>
            <person name="Hilbert H."/>
            <person name="Duesterhoeft A."/>
            <person name="Moores T."/>
            <person name="Jones J.D.G."/>
            <person name="Eneva T."/>
            <person name="Palme K."/>
            <person name="Benes V."/>
            <person name="Rechmann S."/>
            <person name="Ansorge W."/>
            <person name="Cooke R."/>
            <person name="Berger C."/>
            <person name="Delseny M."/>
            <person name="Voet M."/>
            <person name="Volckaert G."/>
            <person name="Mewes H.-W."/>
            <person name="Klosterman S."/>
            <person name="Schueller C."/>
            <person name="Chalwatzis N."/>
        </authorList>
    </citation>
    <scope>NUCLEOTIDE SEQUENCE [LARGE SCALE GENOMIC DNA]</scope>
    <source>
        <strain>cv. Columbia</strain>
    </source>
</reference>
<reference key="2">
    <citation type="journal article" date="1999" name="Nature">
        <title>Sequence and analysis of chromosome 4 of the plant Arabidopsis thaliana.</title>
        <authorList>
            <person name="Mayer K.F.X."/>
            <person name="Schueller C."/>
            <person name="Wambutt R."/>
            <person name="Murphy G."/>
            <person name="Volckaert G."/>
            <person name="Pohl T."/>
            <person name="Duesterhoeft A."/>
            <person name="Stiekema W."/>
            <person name="Entian K.-D."/>
            <person name="Terryn N."/>
            <person name="Harris B."/>
            <person name="Ansorge W."/>
            <person name="Brandt P."/>
            <person name="Grivell L.A."/>
            <person name="Rieger M."/>
            <person name="Weichselgartner M."/>
            <person name="de Simone V."/>
            <person name="Obermaier B."/>
            <person name="Mache R."/>
            <person name="Mueller M."/>
            <person name="Kreis M."/>
            <person name="Delseny M."/>
            <person name="Puigdomenech P."/>
            <person name="Watson M."/>
            <person name="Schmidtheini T."/>
            <person name="Reichert B."/>
            <person name="Portetelle D."/>
            <person name="Perez-Alonso M."/>
            <person name="Boutry M."/>
            <person name="Bancroft I."/>
            <person name="Vos P."/>
            <person name="Hoheisel J."/>
            <person name="Zimmermann W."/>
            <person name="Wedler H."/>
            <person name="Ridley P."/>
            <person name="Langham S.-A."/>
            <person name="McCullagh B."/>
            <person name="Bilham L."/>
            <person name="Robben J."/>
            <person name="van der Schueren J."/>
            <person name="Grymonprez B."/>
            <person name="Chuang Y.-J."/>
            <person name="Vandenbussche F."/>
            <person name="Braeken M."/>
            <person name="Weltjens I."/>
            <person name="Voet M."/>
            <person name="Bastiaens I."/>
            <person name="Aert R."/>
            <person name="Defoor E."/>
            <person name="Weitzenegger T."/>
            <person name="Bothe G."/>
            <person name="Ramsperger U."/>
            <person name="Hilbert H."/>
            <person name="Braun M."/>
            <person name="Holzer E."/>
            <person name="Brandt A."/>
            <person name="Peters S."/>
            <person name="van Staveren M."/>
            <person name="Dirkse W."/>
            <person name="Mooijman P."/>
            <person name="Klein Lankhorst R."/>
            <person name="Rose M."/>
            <person name="Hauf J."/>
            <person name="Koetter P."/>
            <person name="Berneiser S."/>
            <person name="Hempel S."/>
            <person name="Feldpausch M."/>
            <person name="Lamberth S."/>
            <person name="Van den Daele H."/>
            <person name="De Keyser A."/>
            <person name="Buysshaert C."/>
            <person name="Gielen J."/>
            <person name="Villarroel R."/>
            <person name="De Clercq R."/>
            <person name="van Montagu M."/>
            <person name="Rogers J."/>
            <person name="Cronin A."/>
            <person name="Quail M.A."/>
            <person name="Bray-Allen S."/>
            <person name="Clark L."/>
            <person name="Doggett J."/>
            <person name="Hall S."/>
            <person name="Kay M."/>
            <person name="Lennard N."/>
            <person name="McLay K."/>
            <person name="Mayes R."/>
            <person name="Pettett A."/>
            <person name="Rajandream M.A."/>
            <person name="Lyne M."/>
            <person name="Benes V."/>
            <person name="Rechmann S."/>
            <person name="Borkova D."/>
            <person name="Bloecker H."/>
            <person name="Scharfe M."/>
            <person name="Grimm M."/>
            <person name="Loehnert T.-H."/>
            <person name="Dose S."/>
            <person name="de Haan M."/>
            <person name="Maarse A.C."/>
            <person name="Schaefer M."/>
            <person name="Mueller-Auer S."/>
            <person name="Gabel C."/>
            <person name="Fuchs M."/>
            <person name="Fartmann B."/>
            <person name="Granderath K."/>
            <person name="Dauner D."/>
            <person name="Herzl A."/>
            <person name="Neumann S."/>
            <person name="Argiriou A."/>
            <person name="Vitale D."/>
            <person name="Liguori R."/>
            <person name="Piravandi E."/>
            <person name="Massenet O."/>
            <person name="Quigley F."/>
            <person name="Clabauld G."/>
            <person name="Muendlein A."/>
            <person name="Felber R."/>
            <person name="Schnabl S."/>
            <person name="Hiller R."/>
            <person name="Schmidt W."/>
            <person name="Lecharny A."/>
            <person name="Aubourg S."/>
            <person name="Chefdor F."/>
            <person name="Cooke R."/>
            <person name="Berger C."/>
            <person name="Monfort A."/>
            <person name="Casacuberta E."/>
            <person name="Gibbons T."/>
            <person name="Weber N."/>
            <person name="Vandenbol M."/>
            <person name="Bargues M."/>
            <person name="Terol J."/>
            <person name="Torres A."/>
            <person name="Perez-Perez A."/>
            <person name="Purnelle B."/>
            <person name="Bent E."/>
            <person name="Johnson S."/>
            <person name="Tacon D."/>
            <person name="Jesse T."/>
            <person name="Heijnen L."/>
            <person name="Schwarz S."/>
            <person name="Scholler P."/>
            <person name="Heber S."/>
            <person name="Francs P."/>
            <person name="Bielke C."/>
            <person name="Frishman D."/>
            <person name="Haase D."/>
            <person name="Lemcke K."/>
            <person name="Mewes H.-W."/>
            <person name="Stocker S."/>
            <person name="Zaccaria P."/>
            <person name="Bevan M."/>
            <person name="Wilson R.K."/>
            <person name="de la Bastide M."/>
            <person name="Habermann K."/>
            <person name="Parnell L."/>
            <person name="Dedhia N."/>
            <person name="Gnoj L."/>
            <person name="Schutz K."/>
            <person name="Huang E."/>
            <person name="Spiegel L."/>
            <person name="Sekhon M."/>
            <person name="Murray J."/>
            <person name="Sheet P."/>
            <person name="Cordes M."/>
            <person name="Abu-Threideh J."/>
            <person name="Stoneking T."/>
            <person name="Kalicki J."/>
            <person name="Graves T."/>
            <person name="Harmon G."/>
            <person name="Edwards J."/>
            <person name="Latreille P."/>
            <person name="Courtney L."/>
            <person name="Cloud J."/>
            <person name="Abbott A."/>
            <person name="Scott K."/>
            <person name="Johnson D."/>
            <person name="Minx P."/>
            <person name="Bentley D."/>
            <person name="Fulton B."/>
            <person name="Miller N."/>
            <person name="Greco T."/>
            <person name="Kemp K."/>
            <person name="Kramer J."/>
            <person name="Fulton L."/>
            <person name="Mardis E."/>
            <person name="Dante M."/>
            <person name="Pepin K."/>
            <person name="Hillier L.W."/>
            <person name="Nelson J."/>
            <person name="Spieth J."/>
            <person name="Ryan E."/>
            <person name="Andrews S."/>
            <person name="Geisel C."/>
            <person name="Layman D."/>
            <person name="Du H."/>
            <person name="Ali J."/>
            <person name="Berghoff A."/>
            <person name="Jones K."/>
            <person name="Drone K."/>
            <person name="Cotton M."/>
            <person name="Joshu C."/>
            <person name="Antonoiu B."/>
            <person name="Zidanic M."/>
            <person name="Strong C."/>
            <person name="Sun H."/>
            <person name="Lamar B."/>
            <person name="Yordan C."/>
            <person name="Ma P."/>
            <person name="Zhong J."/>
            <person name="Preston R."/>
            <person name="Vil D."/>
            <person name="Shekher M."/>
            <person name="Matero A."/>
            <person name="Shah R."/>
            <person name="Swaby I.K."/>
            <person name="O'Shaughnessy A."/>
            <person name="Rodriguez M."/>
            <person name="Hoffman J."/>
            <person name="Till S."/>
            <person name="Granat S."/>
            <person name="Shohdy N."/>
            <person name="Hasegawa A."/>
            <person name="Hameed A."/>
            <person name="Lodhi M."/>
            <person name="Johnson A."/>
            <person name="Chen E."/>
            <person name="Marra M.A."/>
            <person name="Martienssen R."/>
            <person name="McCombie W.R."/>
        </authorList>
    </citation>
    <scope>NUCLEOTIDE SEQUENCE [LARGE SCALE GENOMIC DNA]</scope>
    <source>
        <strain>cv. Columbia</strain>
    </source>
</reference>
<reference key="3">
    <citation type="journal article" date="2017" name="Plant J.">
        <title>Araport11: a complete reannotation of the Arabidopsis thaliana reference genome.</title>
        <authorList>
            <person name="Cheng C.Y."/>
            <person name="Krishnakumar V."/>
            <person name="Chan A.P."/>
            <person name="Thibaud-Nissen F."/>
            <person name="Schobel S."/>
            <person name="Town C.D."/>
        </authorList>
    </citation>
    <scope>GENOME REANNOTATION</scope>
    <source>
        <strain>cv. Columbia</strain>
    </source>
</reference>
<reference key="4">
    <citation type="submission" date="2008-06" db="EMBL/GenBank/DDBJ databases">
        <title>Arabidopsis ORF clones.</title>
        <authorList>
            <person name="De Los Reyes C."/>
            <person name="Quan R."/>
            <person name="Chen H."/>
            <person name="Bautista V.R."/>
            <person name="Kim C.J."/>
            <person name="Ecker J.R."/>
        </authorList>
    </citation>
    <scope>NUCLEOTIDE SEQUENCE [LARGE SCALE MRNA]</scope>
    <source>
        <strain>cv. Columbia</strain>
    </source>
</reference>
<reference key="5">
    <citation type="journal article" date="2003" name="Science">
        <title>Empirical analysis of transcriptional activity in the Arabidopsis genome.</title>
        <authorList>
            <person name="Yamada K."/>
            <person name="Lim J."/>
            <person name="Dale J.M."/>
            <person name="Chen H."/>
            <person name="Shinn P."/>
            <person name="Palm C.J."/>
            <person name="Southwick A.M."/>
            <person name="Wu H.C."/>
            <person name="Kim C.J."/>
            <person name="Nguyen M."/>
            <person name="Pham P.K."/>
            <person name="Cheuk R.F."/>
            <person name="Karlin-Newmann G."/>
            <person name="Liu S.X."/>
            <person name="Lam B."/>
            <person name="Sakano H."/>
            <person name="Wu T."/>
            <person name="Yu G."/>
            <person name="Miranda M."/>
            <person name="Quach H.L."/>
            <person name="Tripp M."/>
            <person name="Chang C.H."/>
            <person name="Lee J.M."/>
            <person name="Toriumi M.J."/>
            <person name="Chan M.M."/>
            <person name="Tang C.C."/>
            <person name="Onodera C.S."/>
            <person name="Deng J.M."/>
            <person name="Akiyama K."/>
            <person name="Ansari Y."/>
            <person name="Arakawa T."/>
            <person name="Banh J."/>
            <person name="Banno F."/>
            <person name="Bowser L."/>
            <person name="Brooks S.Y."/>
            <person name="Carninci P."/>
            <person name="Chao Q."/>
            <person name="Choy N."/>
            <person name="Enju A."/>
            <person name="Goldsmith A.D."/>
            <person name="Gurjal M."/>
            <person name="Hansen N.F."/>
            <person name="Hayashizaki Y."/>
            <person name="Johnson-Hopson C."/>
            <person name="Hsuan V.W."/>
            <person name="Iida K."/>
            <person name="Karnes M."/>
            <person name="Khan S."/>
            <person name="Koesema E."/>
            <person name="Ishida J."/>
            <person name="Jiang P.X."/>
            <person name="Jones T."/>
            <person name="Kawai J."/>
            <person name="Kamiya A."/>
            <person name="Meyers C."/>
            <person name="Nakajima M."/>
            <person name="Narusaka M."/>
            <person name="Seki M."/>
            <person name="Sakurai T."/>
            <person name="Satou M."/>
            <person name="Tamse R."/>
            <person name="Vaysberg M."/>
            <person name="Wallender E.K."/>
            <person name="Wong C."/>
            <person name="Yamamura Y."/>
            <person name="Yuan S."/>
            <person name="Shinozaki K."/>
            <person name="Davis R.W."/>
            <person name="Theologis A."/>
            <person name="Ecker J.R."/>
        </authorList>
    </citation>
    <scope>NUCLEOTIDE SEQUENCE [LARGE SCALE MRNA] OF 47-384</scope>
    <source>
        <strain>cv. Columbia</strain>
    </source>
</reference>
<reference key="6">
    <citation type="journal article" date="1998" name="Plant Physiol.">
        <title>Molecular characterization of an Arabidopsis gene encoding hydroperoxide lyase, a cytochrome P-450 that is wound inducible.</title>
        <authorList>
            <person name="Bate N.J."/>
            <person name="Sivasankar S."/>
            <person name="Moxon C."/>
            <person name="Riley J.M."/>
            <person name="Thompson J.E."/>
            <person name="Rothstein S.J."/>
        </authorList>
    </citation>
    <scope>TISSUE SPECIFICITY</scope>
    <scope>INDUCTION BY WOUNDING</scope>
</reference>
<reference key="7">
    <citation type="journal article" date="2005" name="Plant Physiol.">
        <title>Variations in CYP74B2 (hydroperoxide lyase) gene expression differentially affect hexenal signaling in the Columbia and Landsberg erecta ecotypes of Arabidopsis.</title>
        <authorList>
            <person name="Duan H."/>
            <person name="Huang M.Y."/>
            <person name="Palacio K."/>
            <person name="Schuler M.A."/>
        </authorList>
    </citation>
    <scope>TISSUE SPECIFICITY</scope>
</reference>